<name>TSAD_BORA1</name>
<feature type="chain" id="PRO_0000303284" description="tRNA N6-adenosine threonylcarbamoyltransferase">
    <location>
        <begin position="1"/>
        <end position="345"/>
    </location>
</feature>
<feature type="binding site" evidence="1">
    <location>
        <position position="111"/>
    </location>
    <ligand>
        <name>Fe cation</name>
        <dbReference type="ChEBI" id="CHEBI:24875"/>
    </ligand>
</feature>
<feature type="binding site" evidence="1">
    <location>
        <position position="115"/>
    </location>
    <ligand>
        <name>Fe cation</name>
        <dbReference type="ChEBI" id="CHEBI:24875"/>
    </ligand>
</feature>
<feature type="binding site" evidence="1">
    <location>
        <begin position="134"/>
        <end position="138"/>
    </location>
    <ligand>
        <name>substrate</name>
    </ligand>
</feature>
<feature type="binding site" evidence="1">
    <location>
        <position position="167"/>
    </location>
    <ligand>
        <name>substrate</name>
    </ligand>
</feature>
<feature type="binding site" evidence="1">
    <location>
        <position position="180"/>
    </location>
    <ligand>
        <name>substrate</name>
    </ligand>
</feature>
<feature type="binding site" evidence="1">
    <location>
        <position position="276"/>
    </location>
    <ligand>
        <name>substrate</name>
    </ligand>
</feature>
<feature type="binding site" evidence="1">
    <location>
        <position position="304"/>
    </location>
    <ligand>
        <name>Fe cation</name>
        <dbReference type="ChEBI" id="CHEBI:24875"/>
    </ligand>
</feature>
<gene>
    <name evidence="1" type="primary">tsaD</name>
    <name type="synonym">gcp</name>
    <name type="ordered locus">BAV1983</name>
</gene>
<keyword id="KW-0012">Acyltransferase</keyword>
<keyword id="KW-0963">Cytoplasm</keyword>
<keyword id="KW-0408">Iron</keyword>
<keyword id="KW-0479">Metal-binding</keyword>
<keyword id="KW-1185">Reference proteome</keyword>
<keyword id="KW-0808">Transferase</keyword>
<keyword id="KW-0819">tRNA processing</keyword>
<proteinExistence type="inferred from homology"/>
<reference key="1">
    <citation type="journal article" date="2006" name="J. Bacteriol.">
        <title>Comparison of the genome sequence of the poultry pathogen Bordetella avium with those of B. bronchiseptica, B. pertussis, and B. parapertussis reveals extensive diversity in surface structures associated with host interaction.</title>
        <authorList>
            <person name="Sebaihia M."/>
            <person name="Preston A."/>
            <person name="Maskell D.J."/>
            <person name="Kuzmiak H."/>
            <person name="Connell T.D."/>
            <person name="King N.D."/>
            <person name="Orndorff P.E."/>
            <person name="Miyamoto D.M."/>
            <person name="Thomson N.R."/>
            <person name="Harris D."/>
            <person name="Goble A."/>
            <person name="Lord A."/>
            <person name="Murphy L."/>
            <person name="Quail M.A."/>
            <person name="Rutter S."/>
            <person name="Squares R."/>
            <person name="Squares S."/>
            <person name="Woodward J."/>
            <person name="Parkhill J."/>
            <person name="Temple L.M."/>
        </authorList>
    </citation>
    <scope>NUCLEOTIDE SEQUENCE [LARGE SCALE GENOMIC DNA]</scope>
    <source>
        <strain>197N</strain>
    </source>
</reference>
<accession>Q2L002</accession>
<dbReference type="EC" id="2.3.1.234" evidence="1"/>
<dbReference type="EMBL" id="AM167904">
    <property type="protein sequence ID" value="CAJ49592.1"/>
    <property type="molecule type" value="Genomic_DNA"/>
</dbReference>
<dbReference type="RefSeq" id="WP_012417649.1">
    <property type="nucleotide sequence ID" value="NC_010645.1"/>
</dbReference>
<dbReference type="SMR" id="Q2L002"/>
<dbReference type="STRING" id="360910.BAV1983"/>
<dbReference type="KEGG" id="bav:BAV1983"/>
<dbReference type="eggNOG" id="COG0533">
    <property type="taxonomic scope" value="Bacteria"/>
</dbReference>
<dbReference type="HOGENOM" id="CLU_023208_0_2_4"/>
<dbReference type="OrthoDB" id="9806197at2"/>
<dbReference type="Proteomes" id="UP000001977">
    <property type="component" value="Chromosome"/>
</dbReference>
<dbReference type="GO" id="GO:0005737">
    <property type="term" value="C:cytoplasm"/>
    <property type="evidence" value="ECO:0007669"/>
    <property type="project" value="UniProtKB-SubCell"/>
</dbReference>
<dbReference type="GO" id="GO:0005506">
    <property type="term" value="F:iron ion binding"/>
    <property type="evidence" value="ECO:0007669"/>
    <property type="project" value="UniProtKB-UniRule"/>
</dbReference>
<dbReference type="GO" id="GO:0061711">
    <property type="term" value="F:N(6)-L-threonylcarbamoyladenine synthase activity"/>
    <property type="evidence" value="ECO:0007669"/>
    <property type="project" value="UniProtKB-EC"/>
</dbReference>
<dbReference type="GO" id="GO:0002949">
    <property type="term" value="P:tRNA threonylcarbamoyladenosine modification"/>
    <property type="evidence" value="ECO:0007669"/>
    <property type="project" value="UniProtKB-UniRule"/>
</dbReference>
<dbReference type="CDD" id="cd24133">
    <property type="entry name" value="ASKHA_NBD_TsaD_bac"/>
    <property type="match status" value="1"/>
</dbReference>
<dbReference type="FunFam" id="3.30.420.40:FF:000012">
    <property type="entry name" value="tRNA N6-adenosine threonylcarbamoyltransferase"/>
    <property type="match status" value="1"/>
</dbReference>
<dbReference type="FunFam" id="3.30.420.40:FF:000040">
    <property type="entry name" value="tRNA N6-adenosine threonylcarbamoyltransferase"/>
    <property type="match status" value="1"/>
</dbReference>
<dbReference type="Gene3D" id="3.30.420.40">
    <property type="match status" value="2"/>
</dbReference>
<dbReference type="HAMAP" id="MF_01445">
    <property type="entry name" value="TsaD"/>
    <property type="match status" value="1"/>
</dbReference>
<dbReference type="InterPro" id="IPR043129">
    <property type="entry name" value="ATPase_NBD"/>
</dbReference>
<dbReference type="InterPro" id="IPR000905">
    <property type="entry name" value="Gcp-like_dom"/>
</dbReference>
<dbReference type="InterPro" id="IPR017861">
    <property type="entry name" value="KAE1/TsaD"/>
</dbReference>
<dbReference type="InterPro" id="IPR022450">
    <property type="entry name" value="TsaD"/>
</dbReference>
<dbReference type="NCBIfam" id="TIGR00329">
    <property type="entry name" value="gcp_kae1"/>
    <property type="match status" value="1"/>
</dbReference>
<dbReference type="NCBIfam" id="TIGR03723">
    <property type="entry name" value="T6A_TsaD_YgjD"/>
    <property type="match status" value="1"/>
</dbReference>
<dbReference type="PANTHER" id="PTHR11735">
    <property type="entry name" value="TRNA N6-ADENOSINE THREONYLCARBAMOYLTRANSFERASE"/>
    <property type="match status" value="1"/>
</dbReference>
<dbReference type="PANTHER" id="PTHR11735:SF6">
    <property type="entry name" value="TRNA N6-ADENOSINE THREONYLCARBAMOYLTRANSFERASE, MITOCHONDRIAL"/>
    <property type="match status" value="1"/>
</dbReference>
<dbReference type="Pfam" id="PF00814">
    <property type="entry name" value="TsaD"/>
    <property type="match status" value="1"/>
</dbReference>
<dbReference type="PRINTS" id="PR00789">
    <property type="entry name" value="OSIALOPTASE"/>
</dbReference>
<dbReference type="SUPFAM" id="SSF53067">
    <property type="entry name" value="Actin-like ATPase domain"/>
    <property type="match status" value="2"/>
</dbReference>
<protein>
    <recommendedName>
        <fullName evidence="1">tRNA N6-adenosine threonylcarbamoyltransferase</fullName>
        <ecNumber evidence="1">2.3.1.234</ecNumber>
    </recommendedName>
    <alternativeName>
        <fullName evidence="1">N6-L-threonylcarbamoyladenine synthase</fullName>
        <shortName evidence="1">t(6)A synthase</shortName>
    </alternativeName>
    <alternativeName>
        <fullName evidence="1">t(6)A37 threonylcarbamoyladenosine biosynthesis protein TsaD</fullName>
    </alternativeName>
    <alternativeName>
        <fullName evidence="1">tRNA threonylcarbamoyladenosine biosynthesis protein TsaD</fullName>
    </alternativeName>
</protein>
<sequence>MIILGFESSCDETGVAAVCTQRGLLAHALHSQIAMHQEYGGVVPELASRDHIRRIVPLTREVLAQAGLRREDVGAVAYTAGPGLAGALLVGASVAQSLAWSLGLPAIAIHHLEGHLLSPLLADPRPEFPFVALLVSGGHTQLMRVDGVGRYVLLGETLDDAAGEAFDKSAKLMGLGYPGGPALSRLAEQGDASRFDLPRPMLHSGDLDFSFSGLKTAVLTRVKAATREGALDEQARADLAAATQAAIIEVLAAKSICALKQTGLKRLVVAGGVGANSLLRQRLAEVLPRMKATAYFPPLSLCTDNGAMIAFAAAERVKAGLANLEQGDHAFTVRPRWDLAELERG</sequence>
<organism>
    <name type="scientific">Bordetella avium (strain 197N)</name>
    <dbReference type="NCBI Taxonomy" id="360910"/>
    <lineage>
        <taxon>Bacteria</taxon>
        <taxon>Pseudomonadati</taxon>
        <taxon>Pseudomonadota</taxon>
        <taxon>Betaproteobacteria</taxon>
        <taxon>Burkholderiales</taxon>
        <taxon>Alcaligenaceae</taxon>
        <taxon>Bordetella</taxon>
    </lineage>
</organism>
<evidence type="ECO:0000255" key="1">
    <source>
        <dbReference type="HAMAP-Rule" id="MF_01445"/>
    </source>
</evidence>
<comment type="function">
    <text evidence="1">Required for the formation of a threonylcarbamoyl group on adenosine at position 37 (t(6)A37) in tRNAs that read codons beginning with adenine. Is involved in the transfer of the threonylcarbamoyl moiety of threonylcarbamoyl-AMP (TC-AMP) to the N6 group of A37, together with TsaE and TsaB. TsaD likely plays a direct catalytic role in this reaction.</text>
</comment>
<comment type="catalytic activity">
    <reaction evidence="1">
        <text>L-threonylcarbamoyladenylate + adenosine(37) in tRNA = N(6)-L-threonylcarbamoyladenosine(37) in tRNA + AMP + H(+)</text>
        <dbReference type="Rhea" id="RHEA:37059"/>
        <dbReference type="Rhea" id="RHEA-COMP:10162"/>
        <dbReference type="Rhea" id="RHEA-COMP:10163"/>
        <dbReference type="ChEBI" id="CHEBI:15378"/>
        <dbReference type="ChEBI" id="CHEBI:73682"/>
        <dbReference type="ChEBI" id="CHEBI:74411"/>
        <dbReference type="ChEBI" id="CHEBI:74418"/>
        <dbReference type="ChEBI" id="CHEBI:456215"/>
        <dbReference type="EC" id="2.3.1.234"/>
    </reaction>
</comment>
<comment type="cofactor">
    <cofactor evidence="1">
        <name>Fe(2+)</name>
        <dbReference type="ChEBI" id="CHEBI:29033"/>
    </cofactor>
    <text evidence="1">Binds 1 Fe(2+) ion per subunit.</text>
</comment>
<comment type="subcellular location">
    <subcellularLocation>
        <location evidence="1">Cytoplasm</location>
    </subcellularLocation>
</comment>
<comment type="similarity">
    <text evidence="1">Belongs to the KAE1 / TsaD family.</text>
</comment>